<gene>
    <name evidence="1" type="primary">cmk</name>
    <name type="ordered locus">LAF_0879</name>
</gene>
<reference key="1">
    <citation type="journal article" date="2008" name="DNA Res.">
        <title>Comparative genome analysis of Lactobacillus reuteri and Lactobacillus fermentum reveal a genomic island for reuterin and cobalamin production.</title>
        <authorList>
            <person name="Morita H."/>
            <person name="Toh H."/>
            <person name="Fukuda S."/>
            <person name="Horikawa H."/>
            <person name="Oshima K."/>
            <person name="Suzuki T."/>
            <person name="Murakami M."/>
            <person name="Hisamatsu S."/>
            <person name="Kato Y."/>
            <person name="Takizawa T."/>
            <person name="Fukuoka H."/>
            <person name="Yoshimura T."/>
            <person name="Itoh K."/>
            <person name="O'Sullivan D.J."/>
            <person name="McKay L.L."/>
            <person name="Ohno H."/>
            <person name="Kikuchi J."/>
            <person name="Masaoka T."/>
            <person name="Hattori M."/>
        </authorList>
    </citation>
    <scope>NUCLEOTIDE SEQUENCE [LARGE SCALE GENOMIC DNA]</scope>
    <source>
        <strain>NBRC 3956 / LMG 18251</strain>
    </source>
</reference>
<evidence type="ECO:0000255" key="1">
    <source>
        <dbReference type="HAMAP-Rule" id="MF_00238"/>
    </source>
</evidence>
<keyword id="KW-0067">ATP-binding</keyword>
<keyword id="KW-0963">Cytoplasm</keyword>
<keyword id="KW-0418">Kinase</keyword>
<keyword id="KW-0547">Nucleotide-binding</keyword>
<keyword id="KW-1185">Reference proteome</keyword>
<keyword id="KW-0808">Transferase</keyword>
<comment type="catalytic activity">
    <reaction evidence="1">
        <text>CMP + ATP = CDP + ADP</text>
        <dbReference type="Rhea" id="RHEA:11600"/>
        <dbReference type="ChEBI" id="CHEBI:30616"/>
        <dbReference type="ChEBI" id="CHEBI:58069"/>
        <dbReference type="ChEBI" id="CHEBI:60377"/>
        <dbReference type="ChEBI" id="CHEBI:456216"/>
        <dbReference type="EC" id="2.7.4.25"/>
    </reaction>
</comment>
<comment type="catalytic activity">
    <reaction evidence="1">
        <text>dCMP + ATP = dCDP + ADP</text>
        <dbReference type="Rhea" id="RHEA:25094"/>
        <dbReference type="ChEBI" id="CHEBI:30616"/>
        <dbReference type="ChEBI" id="CHEBI:57566"/>
        <dbReference type="ChEBI" id="CHEBI:58593"/>
        <dbReference type="ChEBI" id="CHEBI:456216"/>
        <dbReference type="EC" id="2.7.4.25"/>
    </reaction>
</comment>
<comment type="subcellular location">
    <subcellularLocation>
        <location evidence="1">Cytoplasm</location>
    </subcellularLocation>
</comment>
<comment type="similarity">
    <text evidence="1">Belongs to the cytidylate kinase family. Type 1 subfamily.</text>
</comment>
<name>KCY_LIMF3</name>
<sequence length="226" mass="24624">MVKGIQVAIDGPASAGKSTVAKLVAKRFGYIYCDTGAMYRSVTLAALERGIDLSQDDLVSELANQITITFAPGDPQKVFIDGHEVTQAIRSTEVAQHVSTVAAIPAVRSRMVELQRQIAQEGGIVMDGRDIGTTVLPDAPVKIFMVASAHERARRRFLDNQERGIDGGSIEELQRAIELRDQKDSTRAVSPLVKAADAYQLDTTHLTIEQVVDQIAGRIEKTLKQK</sequence>
<organism>
    <name type="scientific">Limosilactobacillus fermentum (strain NBRC 3956 / LMG 18251)</name>
    <name type="common">Lactobacillus fermentum</name>
    <dbReference type="NCBI Taxonomy" id="334390"/>
    <lineage>
        <taxon>Bacteria</taxon>
        <taxon>Bacillati</taxon>
        <taxon>Bacillota</taxon>
        <taxon>Bacilli</taxon>
        <taxon>Lactobacillales</taxon>
        <taxon>Lactobacillaceae</taxon>
        <taxon>Limosilactobacillus</taxon>
    </lineage>
</organism>
<protein>
    <recommendedName>
        <fullName evidence="1">Cytidylate kinase</fullName>
        <shortName evidence="1">CK</shortName>
        <ecNumber evidence="1">2.7.4.25</ecNumber>
    </recommendedName>
    <alternativeName>
        <fullName evidence="1">Cytidine monophosphate kinase</fullName>
        <shortName evidence="1">CMP kinase</shortName>
    </alternativeName>
</protein>
<dbReference type="EC" id="2.7.4.25" evidence="1"/>
<dbReference type="EMBL" id="AP008937">
    <property type="protein sequence ID" value="BAG27215.1"/>
    <property type="molecule type" value="Genomic_DNA"/>
</dbReference>
<dbReference type="RefSeq" id="WP_003684936.1">
    <property type="nucleotide sequence ID" value="NC_010610.1"/>
</dbReference>
<dbReference type="SMR" id="B2GC33"/>
<dbReference type="KEGG" id="lfe:LAF_0879"/>
<dbReference type="eggNOG" id="COG0283">
    <property type="taxonomic scope" value="Bacteria"/>
</dbReference>
<dbReference type="HOGENOM" id="CLU_079959_0_2_9"/>
<dbReference type="Proteomes" id="UP000001697">
    <property type="component" value="Chromosome"/>
</dbReference>
<dbReference type="GO" id="GO:0005829">
    <property type="term" value="C:cytosol"/>
    <property type="evidence" value="ECO:0007669"/>
    <property type="project" value="TreeGrafter"/>
</dbReference>
<dbReference type="GO" id="GO:0005524">
    <property type="term" value="F:ATP binding"/>
    <property type="evidence" value="ECO:0007669"/>
    <property type="project" value="UniProtKB-UniRule"/>
</dbReference>
<dbReference type="GO" id="GO:0036430">
    <property type="term" value="F:CMP kinase activity"/>
    <property type="evidence" value="ECO:0007669"/>
    <property type="project" value="RHEA"/>
</dbReference>
<dbReference type="GO" id="GO:0036431">
    <property type="term" value="F:dCMP kinase activity"/>
    <property type="evidence" value="ECO:0007669"/>
    <property type="project" value="RHEA"/>
</dbReference>
<dbReference type="GO" id="GO:0015949">
    <property type="term" value="P:nucleobase-containing small molecule interconversion"/>
    <property type="evidence" value="ECO:0007669"/>
    <property type="project" value="TreeGrafter"/>
</dbReference>
<dbReference type="GO" id="GO:0006220">
    <property type="term" value="P:pyrimidine nucleotide metabolic process"/>
    <property type="evidence" value="ECO:0007669"/>
    <property type="project" value="UniProtKB-UniRule"/>
</dbReference>
<dbReference type="CDD" id="cd02020">
    <property type="entry name" value="CMPK"/>
    <property type="match status" value="1"/>
</dbReference>
<dbReference type="Gene3D" id="3.40.50.300">
    <property type="entry name" value="P-loop containing nucleotide triphosphate hydrolases"/>
    <property type="match status" value="1"/>
</dbReference>
<dbReference type="HAMAP" id="MF_00238">
    <property type="entry name" value="Cytidyl_kinase_type1"/>
    <property type="match status" value="1"/>
</dbReference>
<dbReference type="InterPro" id="IPR003136">
    <property type="entry name" value="Cytidylate_kin"/>
</dbReference>
<dbReference type="InterPro" id="IPR011994">
    <property type="entry name" value="Cytidylate_kinase_dom"/>
</dbReference>
<dbReference type="InterPro" id="IPR027417">
    <property type="entry name" value="P-loop_NTPase"/>
</dbReference>
<dbReference type="NCBIfam" id="TIGR00017">
    <property type="entry name" value="cmk"/>
    <property type="match status" value="1"/>
</dbReference>
<dbReference type="PANTHER" id="PTHR21299:SF2">
    <property type="entry name" value="CYTIDYLATE KINASE"/>
    <property type="match status" value="1"/>
</dbReference>
<dbReference type="PANTHER" id="PTHR21299">
    <property type="entry name" value="CYTIDYLATE KINASE/PANTOATE-BETA-ALANINE LIGASE"/>
    <property type="match status" value="1"/>
</dbReference>
<dbReference type="Pfam" id="PF02224">
    <property type="entry name" value="Cytidylate_kin"/>
    <property type="match status" value="1"/>
</dbReference>
<dbReference type="SUPFAM" id="SSF52540">
    <property type="entry name" value="P-loop containing nucleoside triphosphate hydrolases"/>
    <property type="match status" value="1"/>
</dbReference>
<proteinExistence type="inferred from homology"/>
<accession>B2GC33</accession>
<feature type="chain" id="PRO_1000119019" description="Cytidylate kinase">
    <location>
        <begin position="1"/>
        <end position="226"/>
    </location>
</feature>
<feature type="binding site" evidence="1">
    <location>
        <begin position="11"/>
        <end position="19"/>
    </location>
    <ligand>
        <name>ATP</name>
        <dbReference type="ChEBI" id="CHEBI:30616"/>
    </ligand>
</feature>